<proteinExistence type="evidence at protein level"/>
<name>RPRML_MOUSE</name>
<accession>Q3URD2</accession>
<gene>
    <name type="primary">Rprml</name>
</gene>
<feature type="chain" id="PRO_0000312757" description="Reprimo-like protein">
    <location>
        <begin position="1"/>
        <end position="117"/>
    </location>
</feature>
<feature type="transmembrane region" description="Helical" evidence="1">
    <location>
        <begin position="64"/>
        <end position="84"/>
    </location>
</feature>
<feature type="modified residue" description="Phosphoserine" evidence="3">
    <location>
        <position position="106"/>
    </location>
</feature>
<organism>
    <name type="scientific">Mus musculus</name>
    <name type="common">Mouse</name>
    <dbReference type="NCBI Taxonomy" id="10090"/>
    <lineage>
        <taxon>Eukaryota</taxon>
        <taxon>Metazoa</taxon>
        <taxon>Chordata</taxon>
        <taxon>Craniata</taxon>
        <taxon>Vertebrata</taxon>
        <taxon>Euteleostomi</taxon>
        <taxon>Mammalia</taxon>
        <taxon>Eutheria</taxon>
        <taxon>Euarchontoglires</taxon>
        <taxon>Glires</taxon>
        <taxon>Rodentia</taxon>
        <taxon>Myomorpha</taxon>
        <taxon>Muroidea</taxon>
        <taxon>Muridae</taxon>
        <taxon>Murinae</taxon>
        <taxon>Mus</taxon>
        <taxon>Mus</taxon>
    </lineage>
</organism>
<reference key="1">
    <citation type="journal article" date="2005" name="Science">
        <title>The transcriptional landscape of the mammalian genome.</title>
        <authorList>
            <person name="Carninci P."/>
            <person name="Kasukawa T."/>
            <person name="Katayama S."/>
            <person name="Gough J."/>
            <person name="Frith M.C."/>
            <person name="Maeda N."/>
            <person name="Oyama R."/>
            <person name="Ravasi T."/>
            <person name="Lenhard B."/>
            <person name="Wells C."/>
            <person name="Kodzius R."/>
            <person name="Shimokawa K."/>
            <person name="Bajic V.B."/>
            <person name="Brenner S.E."/>
            <person name="Batalov S."/>
            <person name="Forrest A.R."/>
            <person name="Zavolan M."/>
            <person name="Davis M.J."/>
            <person name="Wilming L.G."/>
            <person name="Aidinis V."/>
            <person name="Allen J.E."/>
            <person name="Ambesi-Impiombato A."/>
            <person name="Apweiler R."/>
            <person name="Aturaliya R.N."/>
            <person name="Bailey T.L."/>
            <person name="Bansal M."/>
            <person name="Baxter L."/>
            <person name="Beisel K.W."/>
            <person name="Bersano T."/>
            <person name="Bono H."/>
            <person name="Chalk A.M."/>
            <person name="Chiu K.P."/>
            <person name="Choudhary V."/>
            <person name="Christoffels A."/>
            <person name="Clutterbuck D.R."/>
            <person name="Crowe M.L."/>
            <person name="Dalla E."/>
            <person name="Dalrymple B.P."/>
            <person name="de Bono B."/>
            <person name="Della Gatta G."/>
            <person name="di Bernardo D."/>
            <person name="Down T."/>
            <person name="Engstrom P."/>
            <person name="Fagiolini M."/>
            <person name="Faulkner G."/>
            <person name="Fletcher C.F."/>
            <person name="Fukushima T."/>
            <person name="Furuno M."/>
            <person name="Futaki S."/>
            <person name="Gariboldi M."/>
            <person name="Georgii-Hemming P."/>
            <person name="Gingeras T.R."/>
            <person name="Gojobori T."/>
            <person name="Green R.E."/>
            <person name="Gustincich S."/>
            <person name="Harbers M."/>
            <person name="Hayashi Y."/>
            <person name="Hensch T.K."/>
            <person name="Hirokawa N."/>
            <person name="Hill D."/>
            <person name="Huminiecki L."/>
            <person name="Iacono M."/>
            <person name="Ikeo K."/>
            <person name="Iwama A."/>
            <person name="Ishikawa T."/>
            <person name="Jakt M."/>
            <person name="Kanapin A."/>
            <person name="Katoh M."/>
            <person name="Kawasawa Y."/>
            <person name="Kelso J."/>
            <person name="Kitamura H."/>
            <person name="Kitano H."/>
            <person name="Kollias G."/>
            <person name="Krishnan S.P."/>
            <person name="Kruger A."/>
            <person name="Kummerfeld S.K."/>
            <person name="Kurochkin I.V."/>
            <person name="Lareau L.F."/>
            <person name="Lazarevic D."/>
            <person name="Lipovich L."/>
            <person name="Liu J."/>
            <person name="Liuni S."/>
            <person name="McWilliam S."/>
            <person name="Madan Babu M."/>
            <person name="Madera M."/>
            <person name="Marchionni L."/>
            <person name="Matsuda H."/>
            <person name="Matsuzawa S."/>
            <person name="Miki H."/>
            <person name="Mignone F."/>
            <person name="Miyake S."/>
            <person name="Morris K."/>
            <person name="Mottagui-Tabar S."/>
            <person name="Mulder N."/>
            <person name="Nakano N."/>
            <person name="Nakauchi H."/>
            <person name="Ng P."/>
            <person name="Nilsson R."/>
            <person name="Nishiguchi S."/>
            <person name="Nishikawa S."/>
            <person name="Nori F."/>
            <person name="Ohara O."/>
            <person name="Okazaki Y."/>
            <person name="Orlando V."/>
            <person name="Pang K.C."/>
            <person name="Pavan W.J."/>
            <person name="Pavesi G."/>
            <person name="Pesole G."/>
            <person name="Petrovsky N."/>
            <person name="Piazza S."/>
            <person name="Reed J."/>
            <person name="Reid J.F."/>
            <person name="Ring B.Z."/>
            <person name="Ringwald M."/>
            <person name="Rost B."/>
            <person name="Ruan Y."/>
            <person name="Salzberg S.L."/>
            <person name="Sandelin A."/>
            <person name="Schneider C."/>
            <person name="Schoenbach C."/>
            <person name="Sekiguchi K."/>
            <person name="Semple C.A."/>
            <person name="Seno S."/>
            <person name="Sessa L."/>
            <person name="Sheng Y."/>
            <person name="Shibata Y."/>
            <person name="Shimada H."/>
            <person name="Shimada K."/>
            <person name="Silva D."/>
            <person name="Sinclair B."/>
            <person name="Sperling S."/>
            <person name="Stupka E."/>
            <person name="Sugiura K."/>
            <person name="Sultana R."/>
            <person name="Takenaka Y."/>
            <person name="Taki K."/>
            <person name="Tammoja K."/>
            <person name="Tan S.L."/>
            <person name="Tang S."/>
            <person name="Taylor M.S."/>
            <person name="Tegner J."/>
            <person name="Teichmann S.A."/>
            <person name="Ueda H.R."/>
            <person name="van Nimwegen E."/>
            <person name="Verardo R."/>
            <person name="Wei C.L."/>
            <person name="Yagi K."/>
            <person name="Yamanishi H."/>
            <person name="Zabarovsky E."/>
            <person name="Zhu S."/>
            <person name="Zimmer A."/>
            <person name="Hide W."/>
            <person name="Bult C."/>
            <person name="Grimmond S.M."/>
            <person name="Teasdale R.D."/>
            <person name="Liu E.T."/>
            <person name="Brusic V."/>
            <person name="Quackenbush J."/>
            <person name="Wahlestedt C."/>
            <person name="Mattick J.S."/>
            <person name="Hume D.A."/>
            <person name="Kai C."/>
            <person name="Sasaki D."/>
            <person name="Tomaru Y."/>
            <person name="Fukuda S."/>
            <person name="Kanamori-Katayama M."/>
            <person name="Suzuki M."/>
            <person name="Aoki J."/>
            <person name="Arakawa T."/>
            <person name="Iida J."/>
            <person name="Imamura K."/>
            <person name="Itoh M."/>
            <person name="Kato T."/>
            <person name="Kawaji H."/>
            <person name="Kawagashira N."/>
            <person name="Kawashima T."/>
            <person name="Kojima M."/>
            <person name="Kondo S."/>
            <person name="Konno H."/>
            <person name="Nakano K."/>
            <person name="Ninomiya N."/>
            <person name="Nishio T."/>
            <person name="Okada M."/>
            <person name="Plessy C."/>
            <person name="Shibata K."/>
            <person name="Shiraki T."/>
            <person name="Suzuki S."/>
            <person name="Tagami M."/>
            <person name="Waki K."/>
            <person name="Watahiki A."/>
            <person name="Okamura-Oho Y."/>
            <person name="Suzuki H."/>
            <person name="Kawai J."/>
            <person name="Hayashizaki Y."/>
        </authorList>
    </citation>
    <scope>NUCLEOTIDE SEQUENCE [LARGE SCALE MRNA]</scope>
    <source>
        <strain>C57BL/6J</strain>
        <tissue>Hippocampus</tissue>
    </source>
</reference>
<reference key="2">
    <citation type="journal article" date="2009" name="PLoS Biol.">
        <title>Lineage-specific biology revealed by a finished genome assembly of the mouse.</title>
        <authorList>
            <person name="Church D.M."/>
            <person name="Goodstadt L."/>
            <person name="Hillier L.W."/>
            <person name="Zody M.C."/>
            <person name="Goldstein S."/>
            <person name="She X."/>
            <person name="Bult C.J."/>
            <person name="Agarwala R."/>
            <person name="Cherry J.L."/>
            <person name="DiCuccio M."/>
            <person name="Hlavina W."/>
            <person name="Kapustin Y."/>
            <person name="Meric P."/>
            <person name="Maglott D."/>
            <person name="Birtle Z."/>
            <person name="Marques A.C."/>
            <person name="Graves T."/>
            <person name="Zhou S."/>
            <person name="Teague B."/>
            <person name="Potamousis K."/>
            <person name="Churas C."/>
            <person name="Place M."/>
            <person name="Herschleb J."/>
            <person name="Runnheim R."/>
            <person name="Forrest D."/>
            <person name="Amos-Landgraf J."/>
            <person name="Schwartz D.C."/>
            <person name="Cheng Z."/>
            <person name="Lindblad-Toh K."/>
            <person name="Eichler E.E."/>
            <person name="Ponting C.P."/>
        </authorList>
    </citation>
    <scope>NUCLEOTIDE SEQUENCE [LARGE SCALE GENOMIC DNA]</scope>
    <source>
        <strain>C57BL/6J</strain>
    </source>
</reference>
<reference key="3">
    <citation type="journal article" date="2010" name="Cell">
        <title>A tissue-specific atlas of mouse protein phosphorylation and expression.</title>
        <authorList>
            <person name="Huttlin E.L."/>
            <person name="Jedrychowski M.P."/>
            <person name="Elias J.E."/>
            <person name="Goswami T."/>
            <person name="Rad R."/>
            <person name="Beausoleil S.A."/>
            <person name="Villen J."/>
            <person name="Haas W."/>
            <person name="Sowa M.E."/>
            <person name="Gygi S.P."/>
        </authorList>
    </citation>
    <scope>PHOSPHORYLATION [LARGE SCALE ANALYSIS] AT SER-106</scope>
    <scope>IDENTIFICATION BY MASS SPECTROMETRY [LARGE SCALE ANALYSIS]</scope>
    <source>
        <tissue>Brain</tissue>
    </source>
</reference>
<comment type="subcellular location">
    <subcellularLocation>
        <location evidence="2">Membrane</location>
        <topology evidence="2">Single-pass membrane protein</topology>
    </subcellularLocation>
</comment>
<comment type="similarity">
    <text evidence="2">Belongs to the reprimo family.</text>
</comment>
<dbReference type="EMBL" id="AK141598">
    <property type="protein sequence ID" value="BAE24756.1"/>
    <property type="molecule type" value="mRNA"/>
</dbReference>
<dbReference type="EMBL" id="AL627252">
    <property type="status" value="NOT_ANNOTATED_CDS"/>
    <property type="molecule type" value="Genomic_DNA"/>
</dbReference>
<dbReference type="CCDS" id="CCDS25520.1"/>
<dbReference type="RefSeq" id="NP_001028384.1">
    <property type="nucleotide sequence ID" value="NM_001033212.2"/>
</dbReference>
<dbReference type="SMR" id="Q3URD2"/>
<dbReference type="STRING" id="10090.ENSMUSP00000053993"/>
<dbReference type="iPTMnet" id="Q3URD2"/>
<dbReference type="PhosphoSitePlus" id="Q3URD2"/>
<dbReference type="PaxDb" id="10090-ENSMUSP00000053993"/>
<dbReference type="ProteomicsDB" id="299808"/>
<dbReference type="Antibodypedia" id="64103">
    <property type="antibodies" value="17 antibodies from 8 providers"/>
</dbReference>
<dbReference type="Ensembl" id="ENSMUST00000057870.4">
    <property type="protein sequence ID" value="ENSMUSP00000053993.3"/>
    <property type="gene ID" value="ENSMUSG00000046215.4"/>
</dbReference>
<dbReference type="GeneID" id="104582"/>
<dbReference type="KEGG" id="mmu:104582"/>
<dbReference type="UCSC" id="uc007lvn.1">
    <property type="organism name" value="mouse"/>
</dbReference>
<dbReference type="AGR" id="MGI:2144486"/>
<dbReference type="CTD" id="388394"/>
<dbReference type="MGI" id="MGI:2144486">
    <property type="gene designation" value="Rprml"/>
</dbReference>
<dbReference type="VEuPathDB" id="HostDB:ENSMUSG00000046215"/>
<dbReference type="eggNOG" id="ENOG502S6BR">
    <property type="taxonomic scope" value="Eukaryota"/>
</dbReference>
<dbReference type="GeneTree" id="ENSGT00390000010523"/>
<dbReference type="HOGENOM" id="CLU_170456_0_0_1"/>
<dbReference type="InParanoid" id="Q3URD2"/>
<dbReference type="OMA" id="STLIGCC"/>
<dbReference type="OrthoDB" id="9828700at2759"/>
<dbReference type="PhylomeDB" id="Q3URD2"/>
<dbReference type="TreeFam" id="TF332720"/>
<dbReference type="BioGRID-ORCS" id="104582">
    <property type="hits" value="0 hits in 76 CRISPR screens"/>
</dbReference>
<dbReference type="PRO" id="PR:Q3URD2"/>
<dbReference type="Proteomes" id="UP000000589">
    <property type="component" value="Chromosome 11"/>
</dbReference>
<dbReference type="RNAct" id="Q3URD2">
    <property type="molecule type" value="protein"/>
</dbReference>
<dbReference type="Bgee" id="ENSMUSG00000046215">
    <property type="expression patterns" value="Expressed in visual cortex and 69 other cell types or tissues"/>
</dbReference>
<dbReference type="ExpressionAtlas" id="Q3URD2">
    <property type="expression patterns" value="baseline and differential"/>
</dbReference>
<dbReference type="GO" id="GO:0016020">
    <property type="term" value="C:membrane"/>
    <property type="evidence" value="ECO:0007669"/>
    <property type="project" value="UniProtKB-SubCell"/>
</dbReference>
<dbReference type="InterPro" id="IPR043383">
    <property type="entry name" value="Reprimo_fam"/>
</dbReference>
<dbReference type="PANTHER" id="PTHR28649">
    <property type="entry name" value="PROTEIN REPRIMO-RELATED"/>
    <property type="match status" value="1"/>
</dbReference>
<dbReference type="PANTHER" id="PTHR28649:SF3">
    <property type="entry name" value="REPRIMO-LIKE PROTEIN"/>
    <property type="match status" value="1"/>
</dbReference>
<keyword id="KW-0472">Membrane</keyword>
<keyword id="KW-0597">Phosphoprotein</keyword>
<keyword id="KW-1185">Reference proteome</keyword>
<keyword id="KW-0812">Transmembrane</keyword>
<keyword id="KW-1133">Transmembrane helix</keyword>
<protein>
    <recommendedName>
        <fullName>Reprimo-like protein</fullName>
    </recommendedName>
</protein>
<sequence length="117" mass="12348">MNVSFLNHSGLEEVGGDARATLGNRSHGLGTWLDCCPGGAPLTASDGVPAGLAPDERSLWVSRVAQIAVLCVLSLTVVFGVFFLGCNLLIKSESMINFLMQERRPSKDVGAAILGLY</sequence>
<evidence type="ECO:0000255" key="1"/>
<evidence type="ECO:0000305" key="2"/>
<evidence type="ECO:0007744" key="3">
    <source>
    </source>
</evidence>